<feature type="chain" id="PRO_1000165458" description="Small ribosomal subunit protein uS5">
    <location>
        <begin position="1"/>
        <end position="217"/>
    </location>
</feature>
<feature type="domain" description="S5 DRBM" evidence="1">
    <location>
        <begin position="38"/>
        <end position="101"/>
    </location>
</feature>
<feature type="region of interest" description="Disordered" evidence="2">
    <location>
        <begin position="1"/>
        <end position="33"/>
    </location>
</feature>
<feature type="region of interest" description="Disordered" evidence="2">
    <location>
        <begin position="185"/>
        <end position="217"/>
    </location>
</feature>
<feature type="compositionally biased region" description="Basic and acidic residues" evidence="2">
    <location>
        <begin position="11"/>
        <end position="33"/>
    </location>
</feature>
<feature type="compositionally biased region" description="Basic and acidic residues" evidence="2">
    <location>
        <begin position="204"/>
        <end position="217"/>
    </location>
</feature>
<gene>
    <name evidence="1" type="primary">rpsE</name>
    <name type="ordered locus">MLBr01842</name>
</gene>
<comment type="function">
    <text evidence="1">With S4 and S12 plays an important role in translational accuracy.</text>
</comment>
<comment type="function">
    <text evidence="1">Located at the back of the 30S subunit body where it stabilizes the conformation of the head with respect to the body.</text>
</comment>
<comment type="subunit">
    <text evidence="1">Part of the 30S ribosomal subunit. Contacts proteins S4 and S8.</text>
</comment>
<comment type="domain">
    <text>The N-terminal domain interacts with the head of the 30S subunit; the C-terminal domain interacts with the body and contacts protein S4. The interaction surface between S4 and S5 is involved in control of translational fidelity.</text>
</comment>
<comment type="similarity">
    <text evidence="1">Belongs to the universal ribosomal protein uS5 family.</text>
</comment>
<reference key="1">
    <citation type="journal article" date="2009" name="Nat. Genet.">
        <title>Comparative genomic and phylogeographic analysis of Mycobacterium leprae.</title>
        <authorList>
            <person name="Monot M."/>
            <person name="Honore N."/>
            <person name="Garnier T."/>
            <person name="Zidane N."/>
            <person name="Sherafi D."/>
            <person name="Paniz-Mondolfi A."/>
            <person name="Matsuoka M."/>
            <person name="Taylor G.M."/>
            <person name="Donoghue H.D."/>
            <person name="Bouwman A."/>
            <person name="Mays S."/>
            <person name="Watson C."/>
            <person name="Lockwood D."/>
            <person name="Khamispour A."/>
            <person name="Dowlati Y."/>
            <person name="Jianping S."/>
            <person name="Rea T.H."/>
            <person name="Vera-Cabrera L."/>
            <person name="Stefani M.M."/>
            <person name="Banu S."/>
            <person name="Macdonald M."/>
            <person name="Sapkota B.R."/>
            <person name="Spencer J.S."/>
            <person name="Thomas J."/>
            <person name="Harshman K."/>
            <person name="Singh P."/>
            <person name="Busso P."/>
            <person name="Gattiker A."/>
            <person name="Rougemont J."/>
            <person name="Brennan P.J."/>
            <person name="Cole S.T."/>
        </authorList>
    </citation>
    <scope>NUCLEOTIDE SEQUENCE [LARGE SCALE GENOMIC DNA]</scope>
    <source>
        <strain>Br4923</strain>
    </source>
</reference>
<keyword id="KW-0687">Ribonucleoprotein</keyword>
<keyword id="KW-0689">Ribosomal protein</keyword>
<keyword id="KW-0694">RNA-binding</keyword>
<keyword id="KW-0699">rRNA-binding</keyword>
<dbReference type="EMBL" id="FM211192">
    <property type="protein sequence ID" value="CAR71938.1"/>
    <property type="molecule type" value="Genomic_DNA"/>
</dbReference>
<dbReference type="SMR" id="B8ZSA2"/>
<dbReference type="KEGG" id="mlb:MLBr01842"/>
<dbReference type="HOGENOM" id="CLU_065898_1_2_11"/>
<dbReference type="Proteomes" id="UP000006900">
    <property type="component" value="Chromosome"/>
</dbReference>
<dbReference type="GO" id="GO:0015935">
    <property type="term" value="C:small ribosomal subunit"/>
    <property type="evidence" value="ECO:0007669"/>
    <property type="project" value="InterPro"/>
</dbReference>
<dbReference type="GO" id="GO:0019843">
    <property type="term" value="F:rRNA binding"/>
    <property type="evidence" value="ECO:0007669"/>
    <property type="project" value="UniProtKB-UniRule"/>
</dbReference>
<dbReference type="GO" id="GO:0003735">
    <property type="term" value="F:structural constituent of ribosome"/>
    <property type="evidence" value="ECO:0007669"/>
    <property type="project" value="InterPro"/>
</dbReference>
<dbReference type="GO" id="GO:0006412">
    <property type="term" value="P:translation"/>
    <property type="evidence" value="ECO:0007669"/>
    <property type="project" value="UniProtKB-UniRule"/>
</dbReference>
<dbReference type="FunFam" id="3.30.160.20:FF:000001">
    <property type="entry name" value="30S ribosomal protein S5"/>
    <property type="match status" value="1"/>
</dbReference>
<dbReference type="FunFam" id="3.30.230.10:FF:000002">
    <property type="entry name" value="30S ribosomal protein S5"/>
    <property type="match status" value="1"/>
</dbReference>
<dbReference type="Gene3D" id="3.30.160.20">
    <property type="match status" value="1"/>
</dbReference>
<dbReference type="Gene3D" id="3.30.230.10">
    <property type="match status" value="1"/>
</dbReference>
<dbReference type="HAMAP" id="MF_01307_B">
    <property type="entry name" value="Ribosomal_uS5_B"/>
    <property type="match status" value="1"/>
</dbReference>
<dbReference type="InterPro" id="IPR020568">
    <property type="entry name" value="Ribosomal_Su5_D2-typ_SF"/>
</dbReference>
<dbReference type="InterPro" id="IPR000851">
    <property type="entry name" value="Ribosomal_uS5"/>
</dbReference>
<dbReference type="InterPro" id="IPR005712">
    <property type="entry name" value="Ribosomal_uS5_bac-type"/>
</dbReference>
<dbReference type="InterPro" id="IPR005324">
    <property type="entry name" value="Ribosomal_uS5_C"/>
</dbReference>
<dbReference type="InterPro" id="IPR013810">
    <property type="entry name" value="Ribosomal_uS5_N"/>
</dbReference>
<dbReference type="InterPro" id="IPR018192">
    <property type="entry name" value="Ribosomal_uS5_N_CS"/>
</dbReference>
<dbReference type="InterPro" id="IPR014721">
    <property type="entry name" value="Ribsml_uS5_D2-typ_fold_subgr"/>
</dbReference>
<dbReference type="NCBIfam" id="TIGR01021">
    <property type="entry name" value="rpsE_bact"/>
    <property type="match status" value="1"/>
</dbReference>
<dbReference type="PANTHER" id="PTHR48277">
    <property type="entry name" value="MITOCHONDRIAL RIBOSOMAL PROTEIN S5"/>
    <property type="match status" value="1"/>
</dbReference>
<dbReference type="PANTHER" id="PTHR48277:SF1">
    <property type="entry name" value="MITOCHONDRIAL RIBOSOMAL PROTEIN S5"/>
    <property type="match status" value="1"/>
</dbReference>
<dbReference type="Pfam" id="PF00333">
    <property type="entry name" value="Ribosomal_S5"/>
    <property type="match status" value="1"/>
</dbReference>
<dbReference type="Pfam" id="PF03719">
    <property type="entry name" value="Ribosomal_S5_C"/>
    <property type="match status" value="1"/>
</dbReference>
<dbReference type="SUPFAM" id="SSF54768">
    <property type="entry name" value="dsRNA-binding domain-like"/>
    <property type="match status" value="1"/>
</dbReference>
<dbReference type="SUPFAM" id="SSF54211">
    <property type="entry name" value="Ribosomal protein S5 domain 2-like"/>
    <property type="match status" value="1"/>
</dbReference>
<dbReference type="PROSITE" id="PS00585">
    <property type="entry name" value="RIBOSOMAL_S5"/>
    <property type="match status" value="1"/>
</dbReference>
<dbReference type="PROSITE" id="PS50881">
    <property type="entry name" value="S5_DSRBD"/>
    <property type="match status" value="1"/>
</dbReference>
<accession>B8ZSA2</accession>
<protein>
    <recommendedName>
        <fullName evidence="1">Small ribosomal subunit protein uS5</fullName>
    </recommendedName>
    <alternativeName>
        <fullName evidence="3">30S ribosomal protein S5</fullName>
    </alternativeName>
</protein>
<organism>
    <name type="scientific">Mycobacterium leprae (strain Br4923)</name>
    <dbReference type="NCBI Taxonomy" id="561304"/>
    <lineage>
        <taxon>Bacteria</taxon>
        <taxon>Bacillati</taxon>
        <taxon>Actinomycetota</taxon>
        <taxon>Actinomycetes</taxon>
        <taxon>Mycobacteriales</taxon>
        <taxon>Mycobacteriaceae</taxon>
        <taxon>Mycobacterium</taxon>
    </lineage>
</organism>
<evidence type="ECO:0000255" key="1">
    <source>
        <dbReference type="HAMAP-Rule" id="MF_01307"/>
    </source>
</evidence>
<evidence type="ECO:0000256" key="2">
    <source>
        <dbReference type="SAM" id="MobiDB-lite"/>
    </source>
</evidence>
<evidence type="ECO:0000305" key="3"/>
<sequence>MAAQSAGLLGDSREGRSRREGGSRGGRDRDRDGEKGNYLERVVAINRVSKVVKGGRRFSFTALVIVGDGHGMVGVGYGKAKEVPAAIAKGVEEARKSFFRVPLIDGTITHPVQGEAAAGVVLLRPASPGTGVIAGGAVRAVLECAGVHDILAKSLGSDNAINVVHATVAALKLLQRPDEVAARRGLRSGMLPRSWDPAGVAGERSVDRPVGRVREQA</sequence>
<name>RS5_MYCLB</name>
<proteinExistence type="inferred from homology"/>